<sequence length="16" mass="1967">DVPDSLDWRQEXLVRK</sequence>
<name>CATL9_FASHE</name>
<reference key="1">
    <citation type="journal article" date="1995" name="Biochem. Biophys. Res. Commun.">
        <title>Fasciola hepatica: rapid identification of newly excysted juvenile proteins.</title>
        <authorList>
            <person name="Tkalcevic J."/>
            <person name="Ashman K."/>
            <person name="Meeusen E."/>
        </authorList>
    </citation>
    <scope>PROTEIN SEQUENCE</scope>
</reference>
<proteinExistence type="evidence at protein level"/>
<accession>P80533</accession>
<dbReference type="EC" id="3.4.22.-"/>
<dbReference type="MEROPS" id="C01.027"/>
<dbReference type="GO" id="GO:0008234">
    <property type="term" value="F:cysteine-type peptidase activity"/>
    <property type="evidence" value="ECO:0007669"/>
    <property type="project" value="UniProtKB-KW"/>
</dbReference>
<dbReference type="GO" id="GO:0006508">
    <property type="term" value="P:proteolysis"/>
    <property type="evidence" value="ECO:0007669"/>
    <property type="project" value="UniProtKB-KW"/>
</dbReference>
<evidence type="ECO:0000255" key="1">
    <source>
        <dbReference type="PROSITE-ProRule" id="PRU10088"/>
    </source>
</evidence>
<evidence type="ECO:0000255" key="2">
    <source>
        <dbReference type="PROSITE-ProRule" id="PRU10089"/>
    </source>
</evidence>
<evidence type="ECO:0000255" key="3">
    <source>
        <dbReference type="PROSITE-ProRule" id="PRU10090"/>
    </source>
</evidence>
<keyword id="KW-0903">Direct protein sequencing</keyword>
<keyword id="KW-0378">Hydrolase</keyword>
<keyword id="KW-0645">Protease</keyword>
<keyword id="KW-0788">Thiol protease</keyword>
<protein>
    <recommendedName>
        <fullName>Putative cathepsin-like enzyme</fullName>
        <ecNumber>3.4.22.-</ecNumber>
    </recommendedName>
    <alternativeName>
        <fullName>Newly excysted juvenile protein 9</fullName>
    </alternativeName>
</protein>
<organism>
    <name type="scientific">Fasciola hepatica</name>
    <name type="common">Liver fluke</name>
    <dbReference type="NCBI Taxonomy" id="6192"/>
    <lineage>
        <taxon>Eukaryota</taxon>
        <taxon>Metazoa</taxon>
        <taxon>Spiralia</taxon>
        <taxon>Lophotrochozoa</taxon>
        <taxon>Platyhelminthes</taxon>
        <taxon>Trematoda</taxon>
        <taxon>Digenea</taxon>
        <taxon>Plagiorchiida</taxon>
        <taxon>Echinostomata</taxon>
        <taxon>Echinostomatoidea</taxon>
        <taxon>Fasciolidae</taxon>
        <taxon>Fasciola</taxon>
    </lineage>
</organism>
<comment type="developmental stage">
    <text>Expressed at the newly excysted juvenile stage.</text>
</comment>
<comment type="similarity">
    <text evidence="1 2 3">Belongs to the peptidase C1 family.</text>
</comment>
<feature type="chain" id="PRO_0000050542" description="Putative cathepsin-like enzyme">
    <location>
        <begin position="1"/>
        <end position="16" status="greater than"/>
    </location>
</feature>
<feature type="non-terminal residue">
    <location>
        <position position="16"/>
    </location>
</feature>